<proteinExistence type="inferred from homology"/>
<protein>
    <recommendedName>
        <fullName>Secreted effector protein SteA</fullName>
    </recommendedName>
    <alternativeName>
        <fullName>Salmonella translocated effector A</fullName>
    </alternativeName>
</protein>
<sequence>MPYTSVSTYARALSGNKLPHVAAGDYENKLSTKIMKGILYVLTAGLAYGFTRVIEHYCNVTPKVAEFCANAGNIHNHLADAVRDGLFTIDVELSDGRMLTFEQLSLIAEGKPIVRISDGEHTVEVEGTFEEICMRLEEGFFEAPAYYDYDIDEKYKTVRERMAAYNALPQALGAIPCLEYYIARASNMQEAKAQWAADIKARYHNYLDNY</sequence>
<keyword id="KW-1035">Host cytoplasm</keyword>
<keyword id="KW-1185">Reference proteome</keyword>
<keyword id="KW-0964">Secreted</keyword>
<keyword id="KW-0843">Virulence</keyword>
<feature type="chain" id="PRO_0000391635" description="Secreted effector protein SteA">
    <location>
        <begin position="1"/>
        <end position="210"/>
    </location>
</feature>
<name>STEA_SALTY</name>
<comment type="function">
    <text evidence="1">Effector proteins function to alter host cell physiology and promote bacterial survival in host tissues.</text>
</comment>
<comment type="subcellular location">
    <subcellularLocation>
        <location evidence="1">Secreted</location>
    </subcellularLocation>
    <subcellularLocation>
        <location evidence="1">Host cytoplasm</location>
    </subcellularLocation>
    <text evidence="1">Secreted via type III secretion systems 1 and 2 (SPI-1 and SPI-2 T3SS), and delivered into the host cytoplasm.</text>
</comment>
<reference key="1">
    <citation type="journal article" date="2001" name="Nature">
        <title>Complete genome sequence of Salmonella enterica serovar Typhimurium LT2.</title>
        <authorList>
            <person name="McClelland M."/>
            <person name="Sanderson K.E."/>
            <person name="Spieth J."/>
            <person name="Clifton S.W."/>
            <person name="Latreille P."/>
            <person name="Courtney L."/>
            <person name="Porwollik S."/>
            <person name="Ali J."/>
            <person name="Dante M."/>
            <person name="Du F."/>
            <person name="Hou S."/>
            <person name="Layman D."/>
            <person name="Leonard S."/>
            <person name="Nguyen C."/>
            <person name="Scott K."/>
            <person name="Holmes A."/>
            <person name="Grewal N."/>
            <person name="Mulvaney E."/>
            <person name="Ryan E."/>
            <person name="Sun H."/>
            <person name="Florea L."/>
            <person name="Miller W."/>
            <person name="Stoneking T."/>
            <person name="Nhan M."/>
            <person name="Waterston R."/>
            <person name="Wilson R.K."/>
        </authorList>
    </citation>
    <scope>NUCLEOTIDE SEQUENCE [LARGE SCALE GENOMIC DNA]</scope>
    <source>
        <strain>LT2 / SGSC1412 / ATCC 700720</strain>
    </source>
</reference>
<evidence type="ECO:0000250" key="1"/>
<dbReference type="EMBL" id="AE006468">
    <property type="protein sequence ID" value="AAL20501.1"/>
    <property type="molecule type" value="Genomic_DNA"/>
</dbReference>
<dbReference type="RefSeq" id="NP_460542.1">
    <property type="nucleotide sequence ID" value="NC_003197.2"/>
</dbReference>
<dbReference type="RefSeq" id="WP_001147134.1">
    <property type="nucleotide sequence ID" value="NC_003197.2"/>
</dbReference>
<dbReference type="STRING" id="99287.STM1583"/>
<dbReference type="PaxDb" id="99287-STM1583"/>
<dbReference type="GeneID" id="1253101"/>
<dbReference type="KEGG" id="stm:STM1583"/>
<dbReference type="PATRIC" id="fig|99287.12.peg.1674"/>
<dbReference type="HOGENOM" id="CLU_088946_0_0_6"/>
<dbReference type="OMA" id="SFEEICM"/>
<dbReference type="BioCyc" id="SENT99287:STM1583-MONOMER"/>
<dbReference type="Proteomes" id="UP000001014">
    <property type="component" value="Chromosome"/>
</dbReference>
<dbReference type="GO" id="GO:0005576">
    <property type="term" value="C:extracellular region"/>
    <property type="evidence" value="ECO:0007669"/>
    <property type="project" value="UniProtKB-SubCell"/>
</dbReference>
<dbReference type="GO" id="GO:0030430">
    <property type="term" value="C:host cell cytoplasm"/>
    <property type="evidence" value="ECO:0007669"/>
    <property type="project" value="UniProtKB-SubCell"/>
</dbReference>
<organism>
    <name type="scientific">Salmonella typhimurium (strain LT2 / SGSC1412 / ATCC 700720)</name>
    <dbReference type="NCBI Taxonomy" id="99287"/>
    <lineage>
        <taxon>Bacteria</taxon>
        <taxon>Pseudomonadati</taxon>
        <taxon>Pseudomonadota</taxon>
        <taxon>Gammaproteobacteria</taxon>
        <taxon>Enterobacterales</taxon>
        <taxon>Enterobacteriaceae</taxon>
        <taxon>Salmonella</taxon>
    </lineage>
</organism>
<gene>
    <name type="primary">steA</name>
    <name type="ordered locus">STM1583</name>
</gene>
<accession>Q8ZPD7</accession>